<accession>P0A475</accession>
<accession>Q9R453</accession>
<accession>Q9X5K1</accession>
<sequence>MLVPKRVKHRREFRGKMRGEAKGGKEVAFGEYGLQATTSHWITNRQIEAARIAMTRYMKRGGKVWIKIFPHKSYTAKAIGVRMGSGKGAPEGWVAPVKRGKVMFEIAGVSEEIAREALRLASHKLPVKCKFVKREAE</sequence>
<gene>
    <name evidence="1" type="primary">rplP</name>
    <name type="ordered locus">SP_0216</name>
</gene>
<proteinExistence type="evidence at protein level"/>
<protein>
    <recommendedName>
        <fullName evidence="1">Large ribosomal subunit protein uL16</fullName>
    </recommendedName>
    <alternativeName>
        <fullName evidence="3">50S ribosomal protein L16</fullName>
    </alternativeName>
</protein>
<comment type="function">
    <text evidence="1">Binds 23S rRNA and is also seen to make contacts with the A and possibly P site tRNAs.</text>
</comment>
<comment type="subunit">
    <text>Part of the 50S ribosomal subunit.</text>
</comment>
<comment type="similarity">
    <text evidence="1">Belongs to the universal ribosomal protein uL16 family.</text>
</comment>
<evidence type="ECO:0000255" key="1">
    <source>
        <dbReference type="HAMAP-Rule" id="MF_01342"/>
    </source>
</evidence>
<evidence type="ECO:0000269" key="2">
    <source>
    </source>
</evidence>
<evidence type="ECO:0000305" key="3"/>
<reference key="1">
    <citation type="journal article" date="2000" name="Antimicrob. Agents Chemother.">
        <title>Mutations in ribosomal protein L16 conferring reduced susceptibility to evernimicin (SCH27899): implications for mechanism of action.</title>
        <authorList>
            <person name="Adrian P.V."/>
            <person name="Zhao W."/>
            <person name="Black T.A."/>
            <person name="Shaw K.J."/>
            <person name="Hare R.S."/>
            <person name="Klugman K.P."/>
        </authorList>
    </citation>
    <scope>NUCLEOTIDE SEQUENCE [GENOMIC DNA]</scope>
    <scope>MUTAGENESIS OF ILE-52</scope>
    <source>
        <strain>SP#5</strain>
        <strain>ZR1</strain>
    </source>
</reference>
<reference key="2">
    <citation type="journal article" date="2001" name="Science">
        <title>Complete genome sequence of a virulent isolate of Streptococcus pneumoniae.</title>
        <authorList>
            <person name="Tettelin H."/>
            <person name="Nelson K.E."/>
            <person name="Paulsen I.T."/>
            <person name="Eisen J.A."/>
            <person name="Read T.D."/>
            <person name="Peterson S.N."/>
            <person name="Heidelberg J.F."/>
            <person name="DeBoy R.T."/>
            <person name="Haft D.H."/>
            <person name="Dodson R.J."/>
            <person name="Durkin A.S."/>
            <person name="Gwinn M.L."/>
            <person name="Kolonay J.F."/>
            <person name="Nelson W.C."/>
            <person name="Peterson J.D."/>
            <person name="Umayam L.A."/>
            <person name="White O."/>
            <person name="Salzberg S.L."/>
            <person name="Lewis M.R."/>
            <person name="Radune D."/>
            <person name="Holtzapple E.K."/>
            <person name="Khouri H.M."/>
            <person name="Wolf A.M."/>
            <person name="Utterback T.R."/>
            <person name="Hansen C.L."/>
            <person name="McDonald L.A."/>
            <person name="Feldblyum T.V."/>
            <person name="Angiuoli S.V."/>
            <person name="Dickinson T."/>
            <person name="Hickey E.K."/>
            <person name="Holt I.E."/>
            <person name="Loftus B.J."/>
            <person name="Yang F."/>
            <person name="Smith H.O."/>
            <person name="Venter J.C."/>
            <person name="Dougherty B.A."/>
            <person name="Morrison D.A."/>
            <person name="Hollingshead S.K."/>
            <person name="Fraser C.M."/>
        </authorList>
    </citation>
    <scope>NUCLEOTIDE SEQUENCE [LARGE SCALE GENOMIC DNA]</scope>
    <source>
        <strain>ATCC BAA-334 / TIGR4</strain>
    </source>
</reference>
<feature type="chain" id="PRO_0000062217" description="Large ribosomal subunit protein uL16">
    <location>
        <begin position="1"/>
        <end position="137"/>
    </location>
</feature>
<feature type="sequence variant" description="In strain: SP#5 and ZR1; reduced susceptibility to evernimicin.">
    <original>I</original>
    <variation>S</variation>
    <location>
        <position position="52"/>
    </location>
</feature>
<feature type="mutagenesis site" description="Susceptible to evernimicin." evidence="2">
    <original>I</original>
    <variation>R</variation>
    <location>
        <position position="52"/>
    </location>
</feature>
<feature type="mutagenesis site" description="Reduces susceptibility to evernimicin." evidence="2">
    <original>I</original>
    <variation>T</variation>
    <location>
        <position position="52"/>
    </location>
</feature>
<dbReference type="EMBL" id="AF126060">
    <property type="protein sequence ID" value="AAD33272.1"/>
    <property type="molecule type" value="Genomic_DNA"/>
</dbReference>
<dbReference type="EMBL" id="AF126061">
    <property type="protein sequence ID" value="AAD33281.1"/>
    <property type="molecule type" value="Genomic_DNA"/>
</dbReference>
<dbReference type="EMBL" id="AE005672">
    <property type="protein sequence ID" value="AAK74396.1"/>
    <property type="molecule type" value="Genomic_DNA"/>
</dbReference>
<dbReference type="PIR" id="C95025">
    <property type="entry name" value="C95025"/>
</dbReference>
<dbReference type="RefSeq" id="WP_000960946.1">
    <property type="nucleotide sequence ID" value="NZ_CP155539.1"/>
</dbReference>
<dbReference type="SMR" id="P0A475"/>
<dbReference type="PaxDb" id="170187-SP_0216"/>
<dbReference type="EnsemblBacteria" id="AAK74396">
    <property type="protein sequence ID" value="AAK74396"/>
    <property type="gene ID" value="SP_0216"/>
</dbReference>
<dbReference type="GeneID" id="93738964"/>
<dbReference type="KEGG" id="spn:SP_0216"/>
<dbReference type="eggNOG" id="COG0197">
    <property type="taxonomic scope" value="Bacteria"/>
</dbReference>
<dbReference type="PhylomeDB" id="P0A475"/>
<dbReference type="BioCyc" id="SPNE170187:G1FZB-221-MONOMER"/>
<dbReference type="Proteomes" id="UP000000585">
    <property type="component" value="Chromosome"/>
</dbReference>
<dbReference type="GO" id="GO:0022625">
    <property type="term" value="C:cytosolic large ribosomal subunit"/>
    <property type="evidence" value="ECO:0007669"/>
    <property type="project" value="TreeGrafter"/>
</dbReference>
<dbReference type="GO" id="GO:0019843">
    <property type="term" value="F:rRNA binding"/>
    <property type="evidence" value="ECO:0007669"/>
    <property type="project" value="UniProtKB-UniRule"/>
</dbReference>
<dbReference type="GO" id="GO:0003735">
    <property type="term" value="F:structural constituent of ribosome"/>
    <property type="evidence" value="ECO:0007669"/>
    <property type="project" value="InterPro"/>
</dbReference>
<dbReference type="GO" id="GO:0000049">
    <property type="term" value="F:tRNA binding"/>
    <property type="evidence" value="ECO:0007669"/>
    <property type="project" value="UniProtKB-KW"/>
</dbReference>
<dbReference type="GO" id="GO:0046677">
    <property type="term" value="P:response to antibiotic"/>
    <property type="evidence" value="ECO:0007669"/>
    <property type="project" value="UniProtKB-KW"/>
</dbReference>
<dbReference type="GO" id="GO:0006412">
    <property type="term" value="P:translation"/>
    <property type="evidence" value="ECO:0007669"/>
    <property type="project" value="UniProtKB-UniRule"/>
</dbReference>
<dbReference type="CDD" id="cd01433">
    <property type="entry name" value="Ribosomal_L16_L10e"/>
    <property type="match status" value="1"/>
</dbReference>
<dbReference type="FunFam" id="3.90.1170.10:FF:000001">
    <property type="entry name" value="50S ribosomal protein L16"/>
    <property type="match status" value="1"/>
</dbReference>
<dbReference type="Gene3D" id="3.90.1170.10">
    <property type="entry name" value="Ribosomal protein L10e/L16"/>
    <property type="match status" value="1"/>
</dbReference>
<dbReference type="HAMAP" id="MF_01342">
    <property type="entry name" value="Ribosomal_uL16"/>
    <property type="match status" value="1"/>
</dbReference>
<dbReference type="InterPro" id="IPR047873">
    <property type="entry name" value="Ribosomal_uL16"/>
</dbReference>
<dbReference type="InterPro" id="IPR000114">
    <property type="entry name" value="Ribosomal_uL16_bact-type"/>
</dbReference>
<dbReference type="InterPro" id="IPR020798">
    <property type="entry name" value="Ribosomal_uL16_CS"/>
</dbReference>
<dbReference type="InterPro" id="IPR016180">
    <property type="entry name" value="Ribosomal_uL16_dom"/>
</dbReference>
<dbReference type="InterPro" id="IPR036920">
    <property type="entry name" value="Ribosomal_uL16_sf"/>
</dbReference>
<dbReference type="NCBIfam" id="TIGR01164">
    <property type="entry name" value="rplP_bact"/>
    <property type="match status" value="1"/>
</dbReference>
<dbReference type="PANTHER" id="PTHR12220">
    <property type="entry name" value="50S/60S RIBOSOMAL PROTEIN L16"/>
    <property type="match status" value="1"/>
</dbReference>
<dbReference type="PANTHER" id="PTHR12220:SF13">
    <property type="entry name" value="LARGE RIBOSOMAL SUBUNIT PROTEIN UL16M"/>
    <property type="match status" value="1"/>
</dbReference>
<dbReference type="Pfam" id="PF00252">
    <property type="entry name" value="Ribosomal_L16"/>
    <property type="match status" value="1"/>
</dbReference>
<dbReference type="PRINTS" id="PR00060">
    <property type="entry name" value="RIBOSOMALL16"/>
</dbReference>
<dbReference type="SUPFAM" id="SSF54686">
    <property type="entry name" value="Ribosomal protein L16p/L10e"/>
    <property type="match status" value="1"/>
</dbReference>
<dbReference type="PROSITE" id="PS00586">
    <property type="entry name" value="RIBOSOMAL_L16_1"/>
    <property type="match status" value="1"/>
</dbReference>
<dbReference type="PROSITE" id="PS00701">
    <property type="entry name" value="RIBOSOMAL_L16_2"/>
    <property type="match status" value="1"/>
</dbReference>
<keyword id="KW-0046">Antibiotic resistance</keyword>
<keyword id="KW-1185">Reference proteome</keyword>
<keyword id="KW-0687">Ribonucleoprotein</keyword>
<keyword id="KW-0689">Ribosomal protein</keyword>
<keyword id="KW-0694">RNA-binding</keyword>
<keyword id="KW-0699">rRNA-binding</keyword>
<keyword id="KW-0820">tRNA-binding</keyword>
<name>RL16_STRPN</name>
<organism>
    <name type="scientific">Streptococcus pneumoniae serotype 4 (strain ATCC BAA-334 / TIGR4)</name>
    <dbReference type="NCBI Taxonomy" id="170187"/>
    <lineage>
        <taxon>Bacteria</taxon>
        <taxon>Bacillati</taxon>
        <taxon>Bacillota</taxon>
        <taxon>Bacilli</taxon>
        <taxon>Lactobacillales</taxon>
        <taxon>Streptococcaceae</taxon>
        <taxon>Streptococcus</taxon>
    </lineage>
</organism>